<sequence>MRMLPDFFTGNWDDMFQGLLETEYVFDFPEPSEASEEMSLHDLFDVEVDGFEEDANQEAVDGMFPERLLSEAESAAESGSGDSGVGEELLPVDLDLKCYEDGLPPSDPETDEATEAEEEAAMPTYVNENENELVLDCPENPGRGCRACDFHRGTSGNPEAMCALCYMRLTGHCIYSPISDAEGESESGSPEDTDFPHPLTATPPHGIVRTIPCRVSCRRRPAVECIEDLLEEDPTDEPLNLSLKRPKCS</sequence>
<reference key="1">
    <citation type="journal article" date="1987" name="Gene">
        <title>Structure and organization of the left-terminal DNA regions of fastidious adenovirus types 40 and 41.</title>
        <authorList>
            <person name="van Loon A.E."/>
            <person name="Ligtenberg M."/>
            <person name="Reemst A.M.C.B."/>
            <person name="Sussenbach J.S."/>
            <person name="Rozijn T.H."/>
        </authorList>
    </citation>
    <scope>NUCLEOTIDE SEQUENCE [GENOMIC DNA]</scope>
</reference>
<reference key="2">
    <citation type="journal article" date="1988" name="Virology">
        <title>Characterization of adenovirus type 40 E1 region.</title>
        <authorList>
            <person name="Ishino M."/>
            <person name="Ohashi Y."/>
            <person name="Emoto T."/>
            <person name="Sawada Y."/>
            <person name="Fujinaga K."/>
        </authorList>
    </citation>
    <scope>NUCLEOTIDE SEQUENCE [GENOMIC DNA]</scope>
</reference>
<reference key="3">
    <citation type="journal article" date="2014" name="J. Virol.">
        <title>Adenovirus E1A targets the DREF nuclear factor to regulate virus gene expression, DNA replication, and growth.</title>
        <authorList>
            <person name="Radko S."/>
            <person name="Koleva M."/>
            <person name="James K.M."/>
            <person name="Jung R."/>
            <person name="Mymryk J.S."/>
            <person name="Pelka P."/>
        </authorList>
    </citation>
    <scope>INTERACTION WITH HUMAN ZBED1</scope>
</reference>
<protein>
    <recommendedName>
        <fullName>Early E1A protein</fullName>
    </recommendedName>
    <alternativeName>
        <fullName>Early E1A 27 kDa protein</fullName>
    </alternativeName>
</protein>
<accession>P10541</accession>
<dbReference type="EMBL" id="M21276">
    <property type="protein sequence ID" value="AAA42442.1"/>
    <property type="molecule type" value="Genomic_DNA"/>
</dbReference>
<dbReference type="EMBL" id="M18288">
    <property type="protein sequence ID" value="AAA42447.1"/>
    <property type="molecule type" value="Genomic_RNA"/>
</dbReference>
<dbReference type="EMBL" id="M18288">
    <property type="protein sequence ID" value="AAA42446.1"/>
    <property type="molecule type" value="Genomic_RNA"/>
</dbReference>
<dbReference type="EMBL" id="L19443">
    <property type="protein sequence ID" value="AAC13949.1"/>
    <property type="molecule type" value="Genomic_DNA"/>
</dbReference>
<dbReference type="PIR" id="A27333">
    <property type="entry name" value="WMADF3"/>
</dbReference>
<dbReference type="RefSeq" id="NP_040845.1">
    <property type="nucleotide sequence ID" value="NC_001454.1"/>
</dbReference>
<dbReference type="GeneID" id="2715915"/>
<dbReference type="KEGG" id="vg:2715915"/>
<dbReference type="Proteomes" id="UP000151954">
    <property type="component" value="Segment"/>
</dbReference>
<dbReference type="GO" id="GO:0042025">
    <property type="term" value="C:host cell nucleus"/>
    <property type="evidence" value="ECO:0007669"/>
    <property type="project" value="UniProtKB-SubCell"/>
</dbReference>
<dbReference type="GO" id="GO:0008270">
    <property type="term" value="F:zinc ion binding"/>
    <property type="evidence" value="ECO:0007669"/>
    <property type="project" value="UniProtKB-KW"/>
</dbReference>
<dbReference type="GO" id="GO:0006355">
    <property type="term" value="P:regulation of DNA-templated transcription"/>
    <property type="evidence" value="ECO:0007669"/>
    <property type="project" value="InterPro"/>
</dbReference>
<dbReference type="GO" id="GO:0039645">
    <property type="term" value="P:symbiont-mediated perturbation of host cell cycle G1/S transition checkpoint"/>
    <property type="evidence" value="ECO:0007669"/>
    <property type="project" value="UniProtKB-KW"/>
</dbReference>
<dbReference type="GO" id="GO:0039648">
    <property type="term" value="P:symbiont-mediated perturbation of host ubiquitin-like protein modification"/>
    <property type="evidence" value="ECO:0007669"/>
    <property type="project" value="UniProtKB-KW"/>
</dbReference>
<dbReference type="GO" id="GO:0052170">
    <property type="term" value="P:symbiont-mediated suppression of host innate immune response"/>
    <property type="evidence" value="ECO:0007669"/>
    <property type="project" value="UniProtKB-KW"/>
</dbReference>
<dbReference type="GO" id="GO:0039563">
    <property type="term" value="P:symbiont-mediated suppression of host JAK-STAT cascade via inhibition of STAT1 activity"/>
    <property type="evidence" value="ECO:0007669"/>
    <property type="project" value="UniProtKB-KW"/>
</dbReference>
<dbReference type="GO" id="GO:0039502">
    <property type="term" value="P:symbiont-mediated suppression of host type I interferon-mediated signaling pathway"/>
    <property type="evidence" value="ECO:0007669"/>
    <property type="project" value="UniProtKB-KW"/>
</dbReference>
<dbReference type="InterPro" id="IPR014410">
    <property type="entry name" value="Aden_E1A"/>
</dbReference>
<dbReference type="Pfam" id="PF02703">
    <property type="entry name" value="Adeno_E1A"/>
    <property type="match status" value="1"/>
</dbReference>
<dbReference type="PIRSF" id="PIRSF003669">
    <property type="entry name" value="Aden_E1A"/>
    <property type="match status" value="1"/>
</dbReference>
<organismHost>
    <name type="scientific">Homo sapiens</name>
    <name type="common">Human</name>
    <dbReference type="NCBI Taxonomy" id="9606"/>
</organismHost>
<proteinExistence type="evidence at protein level"/>
<name>E1A_ADE40</name>
<keyword id="KW-0010">Activator</keyword>
<keyword id="KW-0025">Alternative splicing</keyword>
<keyword id="KW-0244">Early protein</keyword>
<keyword id="KW-1078">G1/S host cell cycle checkpoint dysregulation by virus</keyword>
<keyword id="KW-1048">Host nucleus</keyword>
<keyword id="KW-0945">Host-virus interaction</keyword>
<keyword id="KW-1090">Inhibition of host innate immune response by virus</keyword>
<keyword id="KW-1114">Inhibition of host interferon signaling pathway by virus</keyword>
<keyword id="KW-1105">Inhibition of host STAT1 by virus</keyword>
<keyword id="KW-0922">Interferon antiviral system evasion</keyword>
<keyword id="KW-0479">Metal-binding</keyword>
<keyword id="KW-1121">Modulation of host cell cycle by virus</keyword>
<keyword id="KW-1123">Modulation of host E3 ubiquitin ligases by virus</keyword>
<keyword id="KW-1130">Modulation of host ubiquitin pathway by virus</keyword>
<keyword id="KW-0553">Oncogene</keyword>
<keyword id="KW-1185">Reference proteome</keyword>
<keyword id="KW-0804">Transcription</keyword>
<keyword id="KW-0805">Transcription regulation</keyword>
<keyword id="KW-0899">Viral immunoevasion</keyword>
<keyword id="KW-0862">Zinc</keyword>
<keyword id="KW-0863">Zinc-finger</keyword>
<organism>
    <name type="scientific">Human adenovirus F serotype 40</name>
    <name type="common">HAdV-40</name>
    <name type="synonym">Human adenovirus 40</name>
    <dbReference type="NCBI Taxonomy" id="28284"/>
    <lineage>
        <taxon>Viruses</taxon>
        <taxon>Varidnaviria</taxon>
        <taxon>Bamfordvirae</taxon>
        <taxon>Preplasmiviricota</taxon>
        <taxon>Tectiliviricetes</taxon>
        <taxon>Rowavirales</taxon>
        <taxon>Adenoviridae</taxon>
        <taxon>Mastadenovirus</taxon>
        <taxon>Human mastadenovirus F</taxon>
    </lineage>
</organism>
<evidence type="ECO:0000250" key="1"/>
<evidence type="ECO:0000250" key="2">
    <source>
        <dbReference type="UniProtKB" id="P03254"/>
    </source>
</evidence>
<evidence type="ECO:0000250" key="3">
    <source>
        <dbReference type="UniProtKB" id="P03255"/>
    </source>
</evidence>
<evidence type="ECO:0000255" key="4"/>
<evidence type="ECO:0000256" key="5">
    <source>
        <dbReference type="SAM" id="MobiDB-lite"/>
    </source>
</evidence>
<evidence type="ECO:0000269" key="6">
    <source>
    </source>
</evidence>
<evidence type="ECO:0000305" key="7"/>
<comment type="function">
    <text evidence="3">Plays a role in viral genome replication by driving entry of quiescent cells into the cell cycle. Stimulation of progression from G1 to S phase allows the virus to efficiently use the cellular DNA replicating machinery to achieve viral genome replication. E1A protein has both transforming and trans-activating activities. Induces the disassembly of the E2F1 transcription factor from RB1 by direct competition for the same binding site on RB1, with subsequent transcriptional activation of E2F1-regulated S-phase genes and of the E2 region of the adenoviral genome. Release of E2F1 leads to the ARF-mediated inhibition of MDM2 and causes TP53/p53 to accumulate because it is not targeted for degradation by MDM2-mediated ubiquitination anymore. This increase in TP53, in turn, would arrest the cell proliferation and direct its death but this effect is counteracted by the viral protein E1B-55K. Inactivation of the ability of RB1 to arrest the cell cycle is critical for cellular transformation, uncontrolled cellular growth and proliferation induced by viral infection. Interaction with RBX1 and CUL1 inhibits ubiquitination of the proteins targeted by SCF(FBXW7) ubiquitin ligase complex, and may be linked to unregulated host cell proliferation. The tumorigenesis-restraining activity of E1A may be related to the disruption of the host CtBP-CtIP complex through the CtBP binding motif. Interaction with host TMEM173/STING impairs the ability of TMEM173/STING to sense cytosolic DNA and promote the production of type I interferon (IFN-alpha and IFN-beta). Promotes the sumoylation of host ZBED1/hDREF with SUMO1 (By similarity).</text>
</comment>
<comment type="subunit">
    <text evidence="2 3 6">Interacts with host UBE2I; this interaction interferes with polySUMOylation. Interacts with host RB1; this interaction induces the aberrant dissociation of RB1-E2F1 complex thereby disrupting the activity of RB1 and activating E2F1-regulated genes. Interacts with host ATF7; the interaction enhances ATF7-mediated viral transactivation activity which requires the zinc binding domains of both proteins. Isoform early E1A 32 kDa protein and isoform early E1A 26 kDa protein interact (via N-terminus) with CUL1 and E3 ubiquitin ligase RBX1; these interactions inhibit RBX1-CUL1-dependent elongation reaction of ubiquitin chains and attenuate ubiquitination of SCF(FBXW7) target proteins. Interacts (via PXLXP motif) with host ZMYND11/BS69 (via MYND-type zinc finger); this interaction inhibits E1A mediated transactivation. Interacts with host EP300; this interaction stimulates the acetylation of RB1 by recruiting EP300 and RB1 into a multimeric-protein complex. Interacts with host CTBP1 and CTBP2; this interaction seems to potentiate viral replication. Interacts with host DCAF7. Interacts with host DYRK1A. Interacts with host KPNA4; this interaction allows E1A import into the host nucleus. Interacts with host EP400; this interaction stabilizes MYC. Interacts with host TBP protein; this interaction probably disrupts the TBP-TATA complex. Interacts (via LXCXE motif) with host TMEM173/STING; this interaction impairs the ability of TMEM173/STING to sense cytosolic DNA and promote the production of type I interferon (IFN-alpha and IFN-beta). Interacts (via C-terminus) with host ZBED1/hDREF (via C-terminus); the interaction is direct (PubMed:25210186).</text>
</comment>
<comment type="subcellular location">
    <subcellularLocation>
        <location evidence="3">Host nucleus</location>
    </subcellularLocation>
</comment>
<comment type="alternative products">
    <event type="alternative splicing"/>
    <isoform>
        <id>P10541-1</id>
        <name>1</name>
        <name>Early E1A 27 kDa protein</name>
        <sequence type="displayed"/>
    </isoform>
    <isoform>
        <id>P10541-2</id>
        <name>2</name>
        <name>Early E1A 25 kDa protein</name>
        <sequence type="described" ref="VSP_000205"/>
    </isoform>
    <text>Isoforms are derived from the E1 region of the genome.</text>
</comment>
<comment type="similarity">
    <text evidence="7">Belongs to the adenoviridae E1A protein family.</text>
</comment>
<feature type="chain" id="PRO_0000221697" description="Early E1A protein">
    <location>
        <begin position="1"/>
        <end position="249"/>
    </location>
</feature>
<feature type="zinc finger region" evidence="2">
    <location>
        <begin position="145"/>
        <end position="165"/>
    </location>
</feature>
<feature type="region of interest" description="Interaction with RB1 in competition with E2F1" evidence="1">
    <location>
        <begin position="38"/>
        <end position="46"/>
    </location>
</feature>
<feature type="region of interest" description="Interaction with UBE2I" evidence="1">
    <location>
        <begin position="74"/>
        <end position="131"/>
    </location>
</feature>
<feature type="region of interest" description="Disordered" evidence="5">
    <location>
        <begin position="180"/>
        <end position="203"/>
    </location>
</feature>
<feature type="short sequence motif" description="LXCXE motif, interaction with host RB1 and TMEM173/STING" evidence="4">
    <location>
        <begin position="96"/>
        <end position="100"/>
    </location>
</feature>
<feature type="short sequence motif" description="PXDLS motif, CTBP-binding" evidence="1">
    <location>
        <begin position="238"/>
        <end position="242"/>
    </location>
</feature>
<feature type="short sequence motif" description="Nuclear localization signal" evidence="4">
    <location>
        <begin position="244"/>
        <end position="248"/>
    </location>
</feature>
<feature type="compositionally biased region" description="Acidic residues" evidence="5">
    <location>
        <begin position="181"/>
        <end position="193"/>
    </location>
</feature>
<feature type="splice variant" id="VSP_000205" description="In isoform 2." evidence="7">
    <location>
        <begin position="149"/>
        <end position="176"/>
    </location>
</feature>
<feature type="sequence conflict" description="In Ref. 2; AAA42442." evidence="7" ref="2">
    <original>M</original>
    <variation>I</variation>
    <location>
        <position position="38"/>
    </location>
</feature>
<feature type="sequence conflict" description="In Ref. 2; AAA42442." evidence="7" ref="2">
    <original>I</original>
    <variation>T</variation>
    <location>
        <position position="211"/>
    </location>
</feature>